<gene>
    <name type="primary">Rpl8</name>
</gene>
<reference key="1">
    <citation type="journal article" date="1992" name="Biochem. Biophys. Res. Commun.">
        <title>The primary structure of rat ribosomal protein L8.</title>
        <authorList>
            <person name="Chan Y.-L."/>
            <person name="Wool I.G."/>
        </authorList>
    </citation>
    <scope>NUCLEOTIDE SEQUENCE [MRNA]</scope>
    <source>
        <strain>Sprague-Dawley</strain>
        <tissue>Liver</tissue>
    </source>
</reference>
<reference key="2">
    <citation type="journal article" date="2004" name="Genome Res.">
        <title>The status, quality, and expansion of the NIH full-length cDNA project: the Mammalian Gene Collection (MGC).</title>
        <authorList>
            <consortium name="The MGC Project Team"/>
        </authorList>
    </citation>
    <scope>NUCLEOTIDE SEQUENCE [LARGE SCALE MRNA]</scope>
    <source>
        <tissue>Ovary</tissue>
    </source>
</reference>
<protein>
    <recommendedName>
        <fullName evidence="4">Large ribosomal subunit protein uL2</fullName>
    </recommendedName>
    <alternativeName>
        <fullName>60S ribosomal protein L8</fullName>
    </alternativeName>
</protein>
<organism>
    <name type="scientific">Rattus norvegicus</name>
    <name type="common">Rat</name>
    <dbReference type="NCBI Taxonomy" id="10116"/>
    <lineage>
        <taxon>Eukaryota</taxon>
        <taxon>Metazoa</taxon>
        <taxon>Chordata</taxon>
        <taxon>Craniata</taxon>
        <taxon>Vertebrata</taxon>
        <taxon>Euteleostomi</taxon>
        <taxon>Mammalia</taxon>
        <taxon>Eutheria</taxon>
        <taxon>Euarchontoglires</taxon>
        <taxon>Glires</taxon>
        <taxon>Rodentia</taxon>
        <taxon>Myomorpha</taxon>
        <taxon>Muroidea</taxon>
        <taxon>Muridae</taxon>
        <taxon>Murinae</taxon>
        <taxon>Rattus</taxon>
    </lineage>
</organism>
<name>RL8_RAT</name>
<accession>P62919</accession>
<accession>A0JMZ6</accession>
<accession>P25120</accession>
<proteinExistence type="evidence at transcript level"/>
<keyword id="KW-0963">Cytoplasm</keyword>
<keyword id="KW-0379">Hydroxylation</keyword>
<keyword id="KW-1017">Isopeptide bond</keyword>
<keyword id="KW-1185">Reference proteome</keyword>
<keyword id="KW-0687">Ribonucleoprotein</keyword>
<keyword id="KW-0689">Ribosomal protein</keyword>
<keyword id="KW-0694">RNA-binding</keyword>
<keyword id="KW-0699">rRNA-binding</keyword>
<keyword id="KW-0832">Ubl conjugation</keyword>
<evidence type="ECO:0000250" key="1">
    <source>
        <dbReference type="UniProtKB" id="P62917"/>
    </source>
</evidence>
<evidence type="ECO:0000250" key="2">
    <source>
        <dbReference type="UniProtKB" id="P62918"/>
    </source>
</evidence>
<evidence type="ECO:0000256" key="3">
    <source>
        <dbReference type="SAM" id="MobiDB-lite"/>
    </source>
</evidence>
<evidence type="ECO:0000305" key="4"/>
<sequence length="257" mass="28025">MGRVIRGQRKGAGSVFRAHVKHRKGAARLRAVDFAERHGYIKGIVKDIIHDPGRGAPLAKVVFRDPYRFKKRTELFIAAEGIHTGQFVYCGKKAQLNIGNVLPVGTMPEGTIVCCLEEKPGDRGKLARASGNYATVISHNPETKKTRVKLPSGSKKVISSANRAVVGVVAGGGRIDKPILKAGRAYHKYKAKRNCWPRVRGVAMNPVEHPFGGGNHQHIGKPSTIRRDAPAGRKVGLIAARRTGRLRGTKTVQEKEN</sequence>
<feature type="chain" id="PRO_0000129746" description="Large ribosomal subunit protein uL2">
    <location>
        <begin position="1"/>
        <end position="257"/>
    </location>
</feature>
<feature type="region of interest" description="Disordered" evidence="3">
    <location>
        <begin position="207"/>
        <end position="232"/>
    </location>
</feature>
<feature type="modified residue" description="(3S)-3-hydroxyhistidine" evidence="1">
    <location>
        <position position="216"/>
    </location>
</feature>
<feature type="cross-link" description="Glycyl lysine isopeptide (Lys-Gly) (interchain with G-Cter in SUMO2)" evidence="1">
    <location>
        <position position="42"/>
    </location>
</feature>
<feature type="cross-link" description="Glycyl lysine isopeptide (Lys-Gly) (interchain with G-Cter in SUMO2)" evidence="1">
    <location>
        <position position="149"/>
    </location>
</feature>
<feature type="cross-link" description="Glycyl lysine isopeptide (Lys-Gly) (interchain with G-Cter in SUMO2)" evidence="1">
    <location>
        <position position="234"/>
    </location>
</feature>
<feature type="cross-link" description="Glycyl lysine isopeptide (Lys-Gly) (interchain with G-Cter in SUMO2)" evidence="1">
    <location>
        <position position="250"/>
    </location>
</feature>
<dbReference type="EMBL" id="X62145">
    <property type="protein sequence ID" value="CAA44071.1"/>
    <property type="molecule type" value="mRNA"/>
</dbReference>
<dbReference type="EMBL" id="BC126063">
    <property type="protein sequence ID" value="AAI26064.1"/>
    <property type="molecule type" value="mRNA"/>
</dbReference>
<dbReference type="PIR" id="JU0177">
    <property type="entry name" value="R5RTL8"/>
</dbReference>
<dbReference type="RefSeq" id="NP_001030088.2">
    <property type="nucleotide sequence ID" value="NM_001034916.3"/>
</dbReference>
<dbReference type="RefSeq" id="XP_002729189.1">
    <property type="nucleotide sequence ID" value="XM_002729143.5"/>
</dbReference>
<dbReference type="RefSeq" id="XP_017450875.1">
    <property type="nucleotide sequence ID" value="XM_017595386.1"/>
</dbReference>
<dbReference type="SMR" id="P62919"/>
<dbReference type="BioGRID" id="247805">
    <property type="interactions" value="4"/>
</dbReference>
<dbReference type="FunCoup" id="P62919">
    <property type="interactions" value="2741"/>
</dbReference>
<dbReference type="IntAct" id="P62919">
    <property type="interactions" value="7"/>
</dbReference>
<dbReference type="STRING" id="10116.ENSRNOP00000046553"/>
<dbReference type="iPTMnet" id="P62919"/>
<dbReference type="PhosphoSitePlus" id="P62919"/>
<dbReference type="SwissPalm" id="P62919"/>
<dbReference type="jPOST" id="P62919"/>
<dbReference type="PaxDb" id="10116-ENSRNOP00000046553"/>
<dbReference type="Ensembl" id="ENSRNOT00000100252.1">
    <property type="protein sequence ID" value="ENSRNOP00000077291.1"/>
    <property type="gene ID" value="ENSRNOG00000068956.1"/>
</dbReference>
<dbReference type="GeneID" id="26962"/>
<dbReference type="KEGG" id="rno:26962"/>
<dbReference type="UCSC" id="RGD:619827">
    <property type="organism name" value="rat"/>
</dbReference>
<dbReference type="AGR" id="RGD:619827"/>
<dbReference type="CTD" id="6132"/>
<dbReference type="RGD" id="619827">
    <property type="gene designation" value="Rpl8"/>
</dbReference>
<dbReference type="eggNOG" id="KOG2309">
    <property type="taxonomic scope" value="Eukaryota"/>
</dbReference>
<dbReference type="GeneTree" id="ENSGT00940000153244"/>
<dbReference type="HOGENOM" id="CLU_036235_0_3_1"/>
<dbReference type="InParanoid" id="P62919"/>
<dbReference type="OMA" id="HPYKFKM"/>
<dbReference type="OrthoDB" id="10267824at2759"/>
<dbReference type="PhylomeDB" id="P62919"/>
<dbReference type="TreeFam" id="TF300748"/>
<dbReference type="Reactome" id="R-RNO-156827">
    <property type="pathway name" value="L13a-mediated translational silencing of Ceruloplasmin expression"/>
</dbReference>
<dbReference type="Reactome" id="R-RNO-1799339">
    <property type="pathway name" value="SRP-dependent cotranslational protein targeting to membrane"/>
</dbReference>
<dbReference type="Reactome" id="R-RNO-6791226">
    <property type="pathway name" value="Major pathway of rRNA processing in the nucleolus and cytosol"/>
</dbReference>
<dbReference type="Reactome" id="R-RNO-72689">
    <property type="pathway name" value="Formation of a pool of free 40S subunits"/>
</dbReference>
<dbReference type="Reactome" id="R-RNO-72706">
    <property type="pathway name" value="GTP hydrolysis and joining of the 60S ribosomal subunit"/>
</dbReference>
<dbReference type="Reactome" id="R-RNO-9629569">
    <property type="pathway name" value="Protein hydroxylation"/>
</dbReference>
<dbReference type="Reactome" id="R-RNO-975956">
    <property type="pathway name" value="Nonsense Mediated Decay (NMD) independent of the Exon Junction Complex (EJC)"/>
</dbReference>
<dbReference type="Reactome" id="R-RNO-975957">
    <property type="pathway name" value="Nonsense Mediated Decay (NMD) enhanced by the Exon Junction Complex (EJC)"/>
</dbReference>
<dbReference type="PRO" id="PR:P62919"/>
<dbReference type="Proteomes" id="UP000002494">
    <property type="component" value="Chromosome 7"/>
</dbReference>
<dbReference type="Bgee" id="ENSRNOG00000032635">
    <property type="expression patterns" value="Expressed in thymus and 19 other cell types or tissues"/>
</dbReference>
<dbReference type="GO" id="GO:0005737">
    <property type="term" value="C:cytoplasm"/>
    <property type="evidence" value="ECO:0000266"/>
    <property type="project" value="RGD"/>
</dbReference>
<dbReference type="GO" id="GO:0022625">
    <property type="term" value="C:cytosolic large ribosomal subunit"/>
    <property type="evidence" value="ECO:0000314"/>
    <property type="project" value="RGD"/>
</dbReference>
<dbReference type="GO" id="GO:0022626">
    <property type="term" value="C:cytosolic ribosome"/>
    <property type="evidence" value="ECO:0000266"/>
    <property type="project" value="RGD"/>
</dbReference>
<dbReference type="GO" id="GO:0098794">
    <property type="term" value="C:postsynapse"/>
    <property type="evidence" value="ECO:0000266"/>
    <property type="project" value="RGD"/>
</dbReference>
<dbReference type="GO" id="GO:0014069">
    <property type="term" value="C:postsynaptic density"/>
    <property type="evidence" value="ECO:0000266"/>
    <property type="project" value="RGD"/>
</dbReference>
<dbReference type="GO" id="GO:0045202">
    <property type="term" value="C:synapse"/>
    <property type="evidence" value="ECO:0000266"/>
    <property type="project" value="RGD"/>
</dbReference>
<dbReference type="GO" id="GO:1990932">
    <property type="term" value="F:5.8S rRNA binding"/>
    <property type="evidence" value="ECO:0000314"/>
    <property type="project" value="RGD"/>
</dbReference>
<dbReference type="GO" id="GO:0003723">
    <property type="term" value="F:RNA binding"/>
    <property type="evidence" value="ECO:0000318"/>
    <property type="project" value="GO_Central"/>
</dbReference>
<dbReference type="GO" id="GO:0003735">
    <property type="term" value="F:structural constituent of ribosome"/>
    <property type="evidence" value="ECO:0000266"/>
    <property type="project" value="RGD"/>
</dbReference>
<dbReference type="GO" id="GO:1990090">
    <property type="term" value="P:cellular response to nerve growth factor stimulus"/>
    <property type="evidence" value="ECO:0000270"/>
    <property type="project" value="RGD"/>
</dbReference>
<dbReference type="GO" id="GO:0002181">
    <property type="term" value="P:cytoplasmic translation"/>
    <property type="evidence" value="ECO:0000266"/>
    <property type="project" value="RGD"/>
</dbReference>
<dbReference type="FunFam" id="4.10.950.10:FF:000002">
    <property type="entry name" value="60S ribosomal protein L2"/>
    <property type="match status" value="1"/>
</dbReference>
<dbReference type="FunFam" id="2.30.30.30:FF:000006">
    <property type="entry name" value="60S ribosomal protein L8"/>
    <property type="match status" value="1"/>
</dbReference>
<dbReference type="FunFam" id="2.40.50.140:FF:000581">
    <property type="entry name" value="Ribosomal protein L8"/>
    <property type="match status" value="1"/>
</dbReference>
<dbReference type="Gene3D" id="2.30.30.30">
    <property type="match status" value="1"/>
</dbReference>
<dbReference type="Gene3D" id="2.40.50.140">
    <property type="entry name" value="Nucleic acid-binding proteins"/>
    <property type="match status" value="1"/>
</dbReference>
<dbReference type="Gene3D" id="4.10.950.10">
    <property type="entry name" value="Ribosomal protein L2, domain 3"/>
    <property type="match status" value="1"/>
</dbReference>
<dbReference type="HAMAP" id="MF_01320_A">
    <property type="entry name" value="Ribosomal_uL2_A"/>
    <property type="match status" value="1"/>
</dbReference>
<dbReference type="InterPro" id="IPR012340">
    <property type="entry name" value="NA-bd_OB-fold"/>
</dbReference>
<dbReference type="InterPro" id="IPR014722">
    <property type="entry name" value="Rib_uL2_dom2"/>
</dbReference>
<dbReference type="InterPro" id="IPR002171">
    <property type="entry name" value="Ribosomal_uL2"/>
</dbReference>
<dbReference type="InterPro" id="IPR023672">
    <property type="entry name" value="Ribosomal_uL2_arc_euk"/>
</dbReference>
<dbReference type="InterPro" id="IPR022669">
    <property type="entry name" value="Ribosomal_uL2_C"/>
</dbReference>
<dbReference type="InterPro" id="IPR022671">
    <property type="entry name" value="Ribosomal_uL2_CS"/>
</dbReference>
<dbReference type="InterPro" id="IPR014726">
    <property type="entry name" value="Ribosomal_uL2_dom3"/>
</dbReference>
<dbReference type="InterPro" id="IPR022666">
    <property type="entry name" value="Ribosomal_uL2_RNA-bd_dom"/>
</dbReference>
<dbReference type="InterPro" id="IPR008991">
    <property type="entry name" value="Translation_prot_SH3-like_sf"/>
</dbReference>
<dbReference type="NCBIfam" id="NF007180">
    <property type="entry name" value="PRK09612.1"/>
    <property type="match status" value="1"/>
</dbReference>
<dbReference type="PANTHER" id="PTHR13691:SF16">
    <property type="entry name" value="LARGE RIBOSOMAL SUBUNIT PROTEIN UL2"/>
    <property type="match status" value="1"/>
</dbReference>
<dbReference type="PANTHER" id="PTHR13691">
    <property type="entry name" value="RIBOSOMAL PROTEIN L2"/>
    <property type="match status" value="1"/>
</dbReference>
<dbReference type="Pfam" id="PF00181">
    <property type="entry name" value="Ribosomal_L2"/>
    <property type="match status" value="1"/>
</dbReference>
<dbReference type="Pfam" id="PF03947">
    <property type="entry name" value="Ribosomal_L2_C"/>
    <property type="match status" value="1"/>
</dbReference>
<dbReference type="PIRSF" id="PIRSF002158">
    <property type="entry name" value="Ribosomal_L2"/>
    <property type="match status" value="1"/>
</dbReference>
<dbReference type="SMART" id="SM01383">
    <property type="entry name" value="Ribosomal_L2"/>
    <property type="match status" value="1"/>
</dbReference>
<dbReference type="SMART" id="SM01382">
    <property type="entry name" value="Ribosomal_L2_C"/>
    <property type="match status" value="1"/>
</dbReference>
<dbReference type="SUPFAM" id="SSF50249">
    <property type="entry name" value="Nucleic acid-binding proteins"/>
    <property type="match status" value="1"/>
</dbReference>
<dbReference type="SUPFAM" id="SSF50104">
    <property type="entry name" value="Translation proteins SH3-like domain"/>
    <property type="match status" value="1"/>
</dbReference>
<dbReference type="PROSITE" id="PS00467">
    <property type="entry name" value="RIBOSOMAL_L2"/>
    <property type="match status" value="1"/>
</dbReference>
<comment type="function">
    <text evidence="1">Component of the large ribosomal subunit. The ribosome is a large ribonucleoprotein complex responsible for the synthesis of proteins in the cell.</text>
</comment>
<comment type="subunit">
    <text evidence="1 2">Component of the large ribosomal subunit (By similarity). Interacts with CRY1 (By similarity).</text>
</comment>
<comment type="subcellular location">
    <subcellularLocation>
        <location evidence="1">Cytoplasm</location>
    </subcellularLocation>
</comment>
<comment type="PTM">
    <text evidence="1">Hydroxylated on His-216 by RIOX1. The modification is impaired by hypoxia.</text>
</comment>
<comment type="similarity">
    <text evidence="4">Belongs to the universal ribosomal protein uL2 family.</text>
</comment>